<reference evidence="14" key="1">
    <citation type="journal article" date="2007" name="J. Bacteriol.">
        <title>Genome sequence of Avery's virulent serotype 2 strain D39 of Streptococcus pneumoniae and comparison with that of unencapsulated laboratory strain R6.</title>
        <authorList>
            <person name="Lanie J.A."/>
            <person name="Ng W.-L."/>
            <person name="Kazmierczak K.M."/>
            <person name="Andrzejewski T.M."/>
            <person name="Davidsen T.M."/>
            <person name="Wayne K.J."/>
            <person name="Tettelin H."/>
            <person name="Glass J.I."/>
            <person name="Winkler M.E."/>
        </authorList>
    </citation>
    <scope>NUCLEOTIDE SEQUENCE [LARGE SCALE GENOMIC DNA]</scope>
    <source>
        <strain evidence="14">D39 / NCTC 7466</strain>
    </source>
</reference>
<reference evidence="11" key="2">
    <citation type="journal article" date="2007" name="J. Bacteriol.">
        <title>Localization of PcsB of Streptococcus pneumoniae and its differential expression in response to stress.</title>
        <authorList>
            <person name="Mills M.F."/>
            <person name="Marquart M.E."/>
            <person name="McDaniel L.S."/>
        </authorList>
    </citation>
    <scope>SUBCELLULAR LOCATION</scope>
    <scope>INDUCTION</scope>
    <source>
        <strain>JD908</strain>
        <strain>WU2</strain>
    </source>
</reference>
<reference evidence="11" key="3">
    <citation type="journal article" date="2009" name="J. Bacteriol.">
        <title>Influences of capsule on cell shape and chain formation of wild-type and pcsB mutants of serotype 2 Streptococcus pneumoniae.</title>
        <authorList>
            <person name="Barendt S.M."/>
            <person name="Land A.D."/>
            <person name="Sham L.T."/>
            <person name="Ng W.L."/>
            <person name="Tsui H.C."/>
            <person name="Arnold R.J."/>
            <person name="Winkler M.E."/>
        </authorList>
    </citation>
    <scope>FUNCTION</scope>
    <scope>DISRUPTION PHENOTYPE</scope>
</reference>
<reference evidence="11" key="4">
    <citation type="journal article" date="2011" name="Proc. Natl. Acad. Sci. U.S.A.">
        <title>Essential PcsB putative peptidoglycan hydrolase interacts with the essential FtsXSpn cell division protein in Streptococcus pneumoniae D39.</title>
        <authorList>
            <person name="Sham L.T."/>
            <person name="Barendt S.M."/>
            <person name="Kopecky K.E."/>
            <person name="Winkler M.E."/>
        </authorList>
    </citation>
    <scope>FUNCTION</scope>
    <scope>INTERACTION WITH FTSX AND FTSE</scope>
    <scope>DOMAIN</scope>
    <scope>SUBCELLULAR LOCATION</scope>
    <scope>IDENTIFICATION BY MASS SPECTROMETRY</scope>
</reference>
<reference evidence="11" key="5">
    <citation type="journal article" date="2019" name="MBio">
        <title>Structure of the Large Extracellular Loop of FtsX and Its Interaction with the Essential Peptidoglycan Hydrolase PcsB in Streptococcus pneumoniae.</title>
        <authorList>
            <person name="Rued B.E."/>
            <person name="Alcorlo M."/>
            <person name="Edmonds K.A."/>
            <person name="Martinez-Caballero S."/>
            <person name="Straume D."/>
            <person name="Fu Y."/>
            <person name="Bruce K.E."/>
            <person name="Wu H."/>
            <person name="Havarstein L.S."/>
            <person name="Hermoso J.A."/>
            <person name="Winkler M.E."/>
            <person name="Giedroc D.P."/>
        </authorList>
    </citation>
    <scope>INTERACTION WITH FTSX</scope>
</reference>
<reference evidence="15" key="6">
    <citation type="journal article" date="2014" name="Nat. Commun.">
        <title>Structural basis of PcsB-mediated cell separation in Streptococcus pneumoniae.</title>
        <authorList>
            <person name="Bartual S.G."/>
            <person name="Straume D."/>
            <person name="Stamsas G.A."/>
            <person name="Munoz I.G."/>
            <person name="Alfonso C."/>
            <person name="Martinez-Ripoll M."/>
            <person name="Havarstein L.S."/>
            <person name="Hermoso J.A."/>
        </authorList>
    </citation>
    <scope>X-RAY CRYSTALLOGRAPHY (2.55 ANGSTROMS)</scope>
    <scope>FUNCTION</scope>
    <scope>CATALYTIC ACTIVITY</scope>
    <scope>ACTIVITY REGULATION</scope>
    <scope>SUBUNIT</scope>
    <scope>MUTAGENESIS OF CYS-292</scope>
</reference>
<accession>A0A0H2ZQ76</accession>
<dbReference type="EC" id="3.2.1.-" evidence="7"/>
<dbReference type="EMBL" id="CP000410">
    <property type="protein sequence ID" value="ABJ54886.1"/>
    <property type="molecule type" value="Genomic_DNA"/>
</dbReference>
<dbReference type="RefSeq" id="WP_000727012.1">
    <property type="nucleotide sequence ID" value="NZ_JAMLJR010000007.1"/>
</dbReference>
<dbReference type="PDB" id="4CGK">
    <property type="method" value="X-ray"/>
    <property type="resolution" value="2.55 A"/>
    <property type="chains" value="A/B=1-392"/>
</dbReference>
<dbReference type="PDBsum" id="4CGK"/>
<dbReference type="SMR" id="A0A0H2ZQ76"/>
<dbReference type="STRING" id="373153.SPD_2043"/>
<dbReference type="PaxDb" id="373153-SPD_2043"/>
<dbReference type="GeneID" id="45652564"/>
<dbReference type="KEGG" id="spd:SPD_2043"/>
<dbReference type="eggNOG" id="COG3883">
    <property type="taxonomic scope" value="Bacteria"/>
</dbReference>
<dbReference type="eggNOG" id="COG3942">
    <property type="taxonomic scope" value="Bacteria"/>
</dbReference>
<dbReference type="HOGENOM" id="CLU_034085_2_2_9"/>
<dbReference type="BioCyc" id="SPNE373153:G1G6V-2193-MONOMER"/>
<dbReference type="EvolutionaryTrace" id="A0A0H2ZQ76"/>
<dbReference type="Proteomes" id="UP000001452">
    <property type="component" value="Chromosome"/>
</dbReference>
<dbReference type="GO" id="GO:0030428">
    <property type="term" value="C:cell septum"/>
    <property type="evidence" value="ECO:0007669"/>
    <property type="project" value="UniProtKB-SubCell"/>
</dbReference>
<dbReference type="GO" id="GO:0005576">
    <property type="term" value="C:extracellular region"/>
    <property type="evidence" value="ECO:0007669"/>
    <property type="project" value="UniProtKB-SubCell"/>
</dbReference>
<dbReference type="GO" id="GO:0005886">
    <property type="term" value="C:plasma membrane"/>
    <property type="evidence" value="ECO:0007669"/>
    <property type="project" value="UniProtKB-SubCell"/>
</dbReference>
<dbReference type="GO" id="GO:0016787">
    <property type="term" value="F:hydrolase activity"/>
    <property type="evidence" value="ECO:0007669"/>
    <property type="project" value="UniProtKB-KW"/>
</dbReference>
<dbReference type="Gene3D" id="6.10.250.3150">
    <property type="match status" value="1"/>
</dbReference>
<dbReference type="Gene3D" id="3.90.1720.10">
    <property type="entry name" value="endopeptidase domain like (from Nostoc punctiforme)"/>
    <property type="match status" value="1"/>
</dbReference>
<dbReference type="InterPro" id="IPR007921">
    <property type="entry name" value="CHAP_dom"/>
</dbReference>
<dbReference type="InterPro" id="IPR038765">
    <property type="entry name" value="Papain-like_cys_pep_sf"/>
</dbReference>
<dbReference type="InterPro" id="IPR009148">
    <property type="entry name" value="PcsB-like"/>
</dbReference>
<dbReference type="NCBIfam" id="NF046104">
    <property type="entry name" value="PptglHdxlasePcsB"/>
    <property type="match status" value="1"/>
</dbReference>
<dbReference type="Pfam" id="PF24568">
    <property type="entry name" value="CC_PcsB"/>
    <property type="match status" value="1"/>
</dbReference>
<dbReference type="Pfam" id="PF05257">
    <property type="entry name" value="CHAP"/>
    <property type="match status" value="1"/>
</dbReference>
<dbReference type="PRINTS" id="PR01852">
    <property type="entry name" value="SIBAPROTEIN"/>
</dbReference>
<dbReference type="SUPFAM" id="SSF54001">
    <property type="entry name" value="Cysteine proteinases"/>
    <property type="match status" value="1"/>
</dbReference>
<dbReference type="PROSITE" id="PS50911">
    <property type="entry name" value="CHAP"/>
    <property type="match status" value="1"/>
</dbReference>
<comment type="function">
    <text evidence="1 5 6 7">Peptidoglycan-hydrolase activity (PubMed:24804636). Required in maintaining normal growth and cellular morphology (PubMed:19270090, PubMed:22006325). Involved in splitting of the septum during cell division (By similarity).</text>
</comment>
<comment type="activity regulation">
    <text evidence="7">Lacks peptidoglycan-hydrolase activity in vitro, probably due to auto-inhibition by the CC domain (PubMed:24804636). In the homodimer, interaction between the CC domain in one monomer and the hydrolase active site in the peptidase C51/CHAP domain in the other monomer probably mediates auto-inhibition of the hydrolase activity (PubMed:24804636).</text>
</comment>
<comment type="subunit">
    <text evidence="6 7 8">Homodimer (PubMed:24804636). Interacts (via N-terminal coiled coil domain) with FtsX (via large extracellular loop) (PubMed:22006325, PubMed:30696736). This interaction directs PcsB to equatorial and septal sites of dividing cells (PubMed:22006325). Interacts with FtsE (PubMed:22006325).</text>
</comment>
<comment type="subcellular location">
    <subcellularLocation>
        <location evidence="4">Cell membrane</location>
        <topology evidence="12">Peripheral membrane protein</topology>
        <orientation evidence="12">Extracellular side</orientation>
    </subcellularLocation>
    <subcellularLocation>
        <location evidence="6">Cell septum</location>
    </subcellularLocation>
    <subcellularLocation>
        <location evidence="4">Secreted</location>
    </subcellularLocation>
    <text evidence="12">Localizes to outer membrane surface, probably due to hydrophobic interactions.</text>
</comment>
<comment type="induction">
    <text evidence="4">Up-regulated in response to raised temperature or salt stress.</text>
</comment>
<comment type="domain">
    <text evidence="6 7">Putative leucine-zipper in coiled-coil (CC) domain essential for function (PubMed:22006325). CC domain probably acts to inhibit peptidoglycan-hydrolase activity of the peptidase C51/CHAP domain (PubMed:24804636).</text>
</comment>
<comment type="domain">
    <text evidence="7">Peptidase C51/CHAP domain has peptidoglycan-hydrolase activity.</text>
</comment>
<comment type="disruption phenotype">
    <text evidence="5">Non-viable.</text>
</comment>
<comment type="caution">
    <text evidence="9">Other strains, such as TIGR4 and PJ1259, are viable following gene deletion, but have growth defects.</text>
</comment>
<protein>
    <recommendedName>
        <fullName evidence="10">Peptidoglycan hydrolase PcsB</fullName>
        <ecNumber evidence="7">3.2.1.-</ecNumber>
    </recommendedName>
</protein>
<evidence type="ECO:0000250" key="1">
    <source>
        <dbReference type="UniProtKB" id="Q8DMY4"/>
    </source>
</evidence>
<evidence type="ECO:0000255" key="2"/>
<evidence type="ECO:0000255" key="3">
    <source>
        <dbReference type="PROSITE-ProRule" id="PRU00048"/>
    </source>
</evidence>
<evidence type="ECO:0000269" key="4">
    <source>
    </source>
</evidence>
<evidence type="ECO:0000269" key="5">
    <source>
    </source>
</evidence>
<evidence type="ECO:0000269" key="6">
    <source>
    </source>
</evidence>
<evidence type="ECO:0000269" key="7">
    <source>
    </source>
</evidence>
<evidence type="ECO:0000269" key="8">
    <source>
    </source>
</evidence>
<evidence type="ECO:0000303" key="9">
    <source>
    </source>
</evidence>
<evidence type="ECO:0000303" key="10">
    <source>
    </source>
</evidence>
<evidence type="ECO:0000305" key="11"/>
<evidence type="ECO:0000305" key="12">
    <source>
    </source>
</evidence>
<evidence type="ECO:0000312" key="13">
    <source>
        <dbReference type="EMBL" id="ABJ54886.1"/>
    </source>
</evidence>
<evidence type="ECO:0000312" key="14">
    <source>
        <dbReference type="Proteomes" id="UP000001452"/>
    </source>
</evidence>
<evidence type="ECO:0007744" key="15">
    <source>
        <dbReference type="PDB" id="4CGK"/>
    </source>
</evidence>
<evidence type="ECO:0007829" key="16">
    <source>
        <dbReference type="PDB" id="4CGK"/>
    </source>
</evidence>
<proteinExistence type="evidence at protein level"/>
<name>PCSB_STRP2</name>
<gene>
    <name evidence="10" type="primary">pcsB</name>
    <name evidence="13" type="ordered locus">SPD_2043</name>
</gene>
<organism evidence="14">
    <name type="scientific">Streptococcus pneumoniae serotype 2 (strain D39 / NCTC 7466)</name>
    <dbReference type="NCBI Taxonomy" id="373153"/>
    <lineage>
        <taxon>Bacteria</taxon>
        <taxon>Bacillati</taxon>
        <taxon>Bacillota</taxon>
        <taxon>Bacilli</taxon>
        <taxon>Lactobacillales</taxon>
        <taxon>Streptococcaceae</taxon>
        <taxon>Streptococcus</taxon>
    </lineage>
</organism>
<feature type="signal peptide" evidence="2">
    <location>
        <begin position="1"/>
        <end position="27"/>
    </location>
</feature>
<feature type="chain" id="PRO_5002603735" description="Peptidoglycan hydrolase PcsB" evidence="2">
    <location>
        <begin position="28"/>
        <end position="392"/>
    </location>
</feature>
<feature type="domain" description="Peptidase C51" evidence="3">
    <location>
        <begin position="267"/>
        <end position="390"/>
    </location>
</feature>
<feature type="region of interest" description="Interacts with large extracellular loop of FtsX" evidence="8">
    <location>
        <begin position="47"/>
        <end position="267"/>
    </location>
</feature>
<feature type="coiled-coil region" evidence="2">
    <location>
        <begin position="34"/>
        <end position="96"/>
    </location>
</feature>
<feature type="coiled-coil region" evidence="2">
    <location>
        <begin position="191"/>
        <end position="227"/>
    </location>
</feature>
<feature type="mutagenesis site" description="Abolishes peptidoglycan-hydrolase activity of the peptidase C51 domain." evidence="7">
    <original>C</original>
    <variation>A</variation>
    <location>
        <position position="292"/>
    </location>
</feature>
<feature type="helix" evidence="16">
    <location>
        <begin position="46"/>
        <end position="111"/>
    </location>
</feature>
<feature type="helix" evidence="16">
    <location>
        <begin position="117"/>
        <end position="125"/>
    </location>
</feature>
<feature type="strand" evidence="16">
    <location>
        <begin position="128"/>
        <end position="130"/>
    </location>
</feature>
<feature type="helix" evidence="16">
    <location>
        <begin position="136"/>
        <end position="207"/>
    </location>
</feature>
<feature type="helix" evidence="16">
    <location>
        <begin position="211"/>
        <end position="252"/>
    </location>
</feature>
<feature type="helix" evidence="16">
    <location>
        <begin position="257"/>
        <end position="266"/>
    </location>
</feature>
<feature type="strand" evidence="16">
    <location>
        <begin position="267"/>
        <end position="269"/>
    </location>
</feature>
<feature type="helix" evidence="16">
    <location>
        <begin position="292"/>
        <end position="299"/>
    </location>
</feature>
<feature type="helix" evidence="16">
    <location>
        <begin position="310"/>
        <end position="312"/>
    </location>
</feature>
<feature type="helix" evidence="16">
    <location>
        <begin position="313"/>
        <end position="320"/>
    </location>
</feature>
<feature type="strand" evidence="16">
    <location>
        <begin position="324"/>
        <end position="327"/>
    </location>
</feature>
<feature type="strand" evidence="16">
    <location>
        <begin position="333"/>
        <end position="337"/>
    </location>
</feature>
<feature type="strand" evidence="16">
    <location>
        <begin position="339"/>
        <end position="341"/>
    </location>
</feature>
<feature type="strand" evidence="16">
    <location>
        <begin position="343"/>
        <end position="352"/>
    </location>
</feature>
<feature type="strand" evidence="16">
    <location>
        <begin position="355"/>
        <end position="363"/>
    </location>
</feature>
<feature type="strand" evidence="16">
    <location>
        <begin position="368"/>
        <end position="370"/>
    </location>
</feature>
<feature type="strand" evidence="16">
    <location>
        <begin position="372"/>
        <end position="376"/>
    </location>
</feature>
<feature type="strand" evidence="16">
    <location>
        <begin position="385"/>
        <end position="389"/>
    </location>
</feature>
<sequence length="392" mass="41697">MKKKILASLLLSTVMVSQVAVLTTAHAETTDDKIAAQDNKISNLTAQQQEAQKQVDQIQEQVSAIQAEQSNLQAENDRLQAESKKLEGEITELSKNIVSRNQSLEKQARSAQTNGAVTSYINTIVNSKSITEAISRVAAMSEIVSANNKMLEQQKADKKAISEKQVANNDAINTVIANQQKLADDAQALTTKQAELKAAELSLAAEKATAEGEKASLLEQKAAAEAEARAAAVAEAAYKEKRASQQQSVLASANTNLTAQVQAVSESAAAPVRAKVRPTYSTNASSYPIGECTWGVKTLAPWAGDYWGNGAQWATSAAAAGFRTGSTPQVGAIACWNDGGYGHVAVVTAVESTTRIQVSESNYAGNRTIGNHRGWFNPTTTSEGFVTYIYAD</sequence>
<keyword id="KW-0002">3D-structure</keyword>
<keyword id="KW-1003">Cell membrane</keyword>
<keyword id="KW-0175">Coiled coil</keyword>
<keyword id="KW-0378">Hydrolase</keyword>
<keyword id="KW-0472">Membrane</keyword>
<keyword id="KW-1185">Reference proteome</keyword>
<keyword id="KW-0964">Secreted</keyword>
<keyword id="KW-0732">Signal</keyword>